<protein>
    <recommendedName>
        <fullName evidence="1">UPF0180 protein BCAH187_A1552</fullName>
    </recommendedName>
</protein>
<gene>
    <name type="ordered locus">BCAH187_A1552</name>
</gene>
<feature type="chain" id="PRO_1000127037" description="UPF0180 protein BCAH187_A1552">
    <location>
        <begin position="1"/>
        <end position="79"/>
    </location>
</feature>
<reference key="1">
    <citation type="submission" date="2008-10" db="EMBL/GenBank/DDBJ databases">
        <title>Genome sequence of Bacillus cereus AH187.</title>
        <authorList>
            <person name="Dodson R.J."/>
            <person name="Durkin A.S."/>
            <person name="Rosovitz M.J."/>
            <person name="Rasko D.A."/>
            <person name="Kolsto A.B."/>
            <person name="Okstad O.A."/>
            <person name="Ravel J."/>
            <person name="Sutton G."/>
        </authorList>
    </citation>
    <scope>NUCLEOTIDE SEQUENCE [LARGE SCALE GENOMIC DNA]</scope>
    <source>
        <strain>AH187</strain>
    </source>
</reference>
<name>Y1552_BACC7</name>
<dbReference type="EMBL" id="CP001177">
    <property type="protein sequence ID" value="ACJ81450.1"/>
    <property type="molecule type" value="Genomic_DNA"/>
</dbReference>
<dbReference type="KEGG" id="bcr:BCAH187_A1552"/>
<dbReference type="HOGENOM" id="CLU_187365_0_0_9"/>
<dbReference type="Proteomes" id="UP000002214">
    <property type="component" value="Chromosome"/>
</dbReference>
<dbReference type="HAMAP" id="MF_00506">
    <property type="entry name" value="UPF0180"/>
    <property type="match status" value="1"/>
</dbReference>
<dbReference type="InterPro" id="IPR005370">
    <property type="entry name" value="UPF0180"/>
</dbReference>
<dbReference type="NCBIfam" id="NF002845">
    <property type="entry name" value="PRK03094.1"/>
    <property type="match status" value="1"/>
</dbReference>
<dbReference type="Pfam" id="PF03698">
    <property type="entry name" value="UPF0180"/>
    <property type="match status" value="1"/>
</dbReference>
<sequence>MAKIGVENSLTDVQQALQQQGHEVITINSEHDAQGCDCCVVTGQDSNMMGIADTSIKGSVINAHGLTTDEICQQVESRI</sequence>
<comment type="similarity">
    <text evidence="1">Belongs to the UPF0180 family.</text>
</comment>
<proteinExistence type="inferred from homology"/>
<evidence type="ECO:0000255" key="1">
    <source>
        <dbReference type="HAMAP-Rule" id="MF_00506"/>
    </source>
</evidence>
<accession>B7HKB7</accession>
<organism>
    <name type="scientific">Bacillus cereus (strain AH187)</name>
    <dbReference type="NCBI Taxonomy" id="405534"/>
    <lineage>
        <taxon>Bacteria</taxon>
        <taxon>Bacillati</taxon>
        <taxon>Bacillota</taxon>
        <taxon>Bacilli</taxon>
        <taxon>Bacillales</taxon>
        <taxon>Bacillaceae</taxon>
        <taxon>Bacillus</taxon>
        <taxon>Bacillus cereus group</taxon>
    </lineage>
</organism>